<dbReference type="EMBL" id="AJ279009">
    <property type="protein sequence ID" value="CAC17380.1"/>
    <property type="molecule type" value="mRNA"/>
</dbReference>
<dbReference type="EMBL" id="AB025630">
    <property type="status" value="NOT_ANNOTATED_CDS"/>
    <property type="molecule type" value="Genomic_DNA"/>
</dbReference>
<dbReference type="EMBL" id="CP002688">
    <property type="protein sequence ID" value="AED94198.1"/>
    <property type="molecule type" value="Genomic_DNA"/>
</dbReference>
<dbReference type="EMBL" id="AY049294">
    <property type="protein sequence ID" value="AAK83636.1"/>
    <property type="status" value="ALT_INIT"/>
    <property type="molecule type" value="mRNA"/>
</dbReference>
<dbReference type="EMBL" id="AY143848">
    <property type="protein sequence ID" value="AAN28787.1"/>
    <property type="molecule type" value="mRNA"/>
</dbReference>
<dbReference type="RefSeq" id="NP_198566.2">
    <property type="nucleotide sequence ID" value="NM_123109.5"/>
</dbReference>
<dbReference type="PDB" id="8WFZ">
    <property type="method" value="EM"/>
    <property type="resolution" value="4.30 A"/>
    <property type="chains" value="A/B/C/D=1-820"/>
</dbReference>
<dbReference type="PDB" id="9J0X">
    <property type="method" value="EM"/>
    <property type="resolution" value="3.00 A"/>
    <property type="chains" value="A/B/C/D=1-820"/>
</dbReference>
<dbReference type="PDB" id="9J0Y">
    <property type="method" value="EM"/>
    <property type="resolution" value="3.14 A"/>
    <property type="chains" value="A/B/C/D=1-820"/>
</dbReference>
<dbReference type="PDB" id="9J0Z">
    <property type="method" value="EM"/>
    <property type="resolution" value="2.60 A"/>
    <property type="chains" value="A/B/C/D=51-820"/>
</dbReference>
<dbReference type="PDB" id="9J10">
    <property type="method" value="EM"/>
    <property type="resolution" value="2.43 A"/>
    <property type="chains" value="A/B/C/D=1-820"/>
</dbReference>
<dbReference type="PDBsum" id="8WFZ"/>
<dbReference type="PDBsum" id="9J0X"/>
<dbReference type="PDBsum" id="9J0Y"/>
<dbReference type="PDBsum" id="9J0Z"/>
<dbReference type="PDBsum" id="9J10"/>
<dbReference type="EMDB" id="EMD-37500"/>
<dbReference type="EMDB" id="EMD-61061"/>
<dbReference type="EMDB" id="EMD-61062"/>
<dbReference type="EMDB" id="EMD-61063"/>
<dbReference type="EMDB" id="EMD-61064"/>
<dbReference type="SMR" id="Q94A76"/>
<dbReference type="BioGRID" id="18979">
    <property type="interactions" value="3"/>
</dbReference>
<dbReference type="FunCoup" id="Q94A76">
    <property type="interactions" value="208"/>
</dbReference>
<dbReference type="IntAct" id="Q94A76">
    <property type="interactions" value="2"/>
</dbReference>
<dbReference type="STRING" id="3702.Q94A76"/>
<dbReference type="TCDB" id="1.A.1.4.4">
    <property type="family name" value="the voltage-gated ion channel (vic) superfamily"/>
</dbReference>
<dbReference type="iPTMnet" id="Q94A76"/>
<dbReference type="PaxDb" id="3702-AT5G37500.1"/>
<dbReference type="ProteomicsDB" id="248447"/>
<dbReference type="EnsemblPlants" id="AT5G37500.1">
    <property type="protein sequence ID" value="AT5G37500.1"/>
    <property type="gene ID" value="AT5G37500"/>
</dbReference>
<dbReference type="GeneID" id="833728"/>
<dbReference type="Gramene" id="AT5G37500.1">
    <property type="protein sequence ID" value="AT5G37500.1"/>
    <property type="gene ID" value="AT5G37500"/>
</dbReference>
<dbReference type="KEGG" id="ath:AT5G37500"/>
<dbReference type="Araport" id="AT5G37500"/>
<dbReference type="TAIR" id="AT5G37500">
    <property type="gene designation" value="GORK"/>
</dbReference>
<dbReference type="eggNOG" id="KOG0498">
    <property type="taxonomic scope" value="Eukaryota"/>
</dbReference>
<dbReference type="HOGENOM" id="CLU_005746_8_3_1"/>
<dbReference type="InParanoid" id="Q94A76"/>
<dbReference type="PhylomeDB" id="Q94A76"/>
<dbReference type="PRO" id="PR:Q94A76"/>
<dbReference type="Proteomes" id="UP000006548">
    <property type="component" value="Chromosome 5"/>
</dbReference>
<dbReference type="ExpressionAtlas" id="Q94A76">
    <property type="expression patterns" value="baseline and differential"/>
</dbReference>
<dbReference type="GO" id="GO:0034702">
    <property type="term" value="C:monoatomic ion channel complex"/>
    <property type="evidence" value="ECO:0007669"/>
    <property type="project" value="UniProtKB-KW"/>
</dbReference>
<dbReference type="GO" id="GO:0005634">
    <property type="term" value="C:nucleus"/>
    <property type="evidence" value="ECO:0007005"/>
    <property type="project" value="TAIR"/>
</dbReference>
<dbReference type="GO" id="GO:0015075">
    <property type="term" value="F:monoatomic ion transmembrane transporter activity"/>
    <property type="evidence" value="ECO:0000315"/>
    <property type="project" value="TAIR"/>
</dbReference>
<dbReference type="GO" id="GO:0015271">
    <property type="term" value="F:outward rectifier potassium channel activity"/>
    <property type="evidence" value="ECO:0000315"/>
    <property type="project" value="TAIR"/>
</dbReference>
<dbReference type="GO" id="GO:0006811">
    <property type="term" value="P:monoatomic ion transport"/>
    <property type="evidence" value="ECO:0000315"/>
    <property type="project" value="TAIR"/>
</dbReference>
<dbReference type="GO" id="GO:0009737">
    <property type="term" value="P:response to abscisic acid"/>
    <property type="evidence" value="ECO:0000270"/>
    <property type="project" value="TAIR"/>
</dbReference>
<dbReference type="GO" id="GO:0051592">
    <property type="term" value="P:response to calcium ion"/>
    <property type="evidence" value="ECO:0000270"/>
    <property type="project" value="TAIR"/>
</dbReference>
<dbReference type="GO" id="GO:0009409">
    <property type="term" value="P:response to cold"/>
    <property type="evidence" value="ECO:0000270"/>
    <property type="project" value="TAIR"/>
</dbReference>
<dbReference type="GO" id="GO:0009753">
    <property type="term" value="P:response to jasmonic acid"/>
    <property type="evidence" value="ECO:0000315"/>
    <property type="project" value="TAIR"/>
</dbReference>
<dbReference type="GO" id="GO:0009414">
    <property type="term" value="P:response to water deprivation"/>
    <property type="evidence" value="ECO:0000270"/>
    <property type="project" value="TAIR"/>
</dbReference>
<dbReference type="CDD" id="cd00038">
    <property type="entry name" value="CAP_ED"/>
    <property type="match status" value="1"/>
</dbReference>
<dbReference type="FunFam" id="1.25.40.20:FF:000563">
    <property type="entry name" value="Gated outwardly-rectifying K+ channel"/>
    <property type="match status" value="1"/>
</dbReference>
<dbReference type="FunFam" id="2.60.120.10:FF:000074">
    <property type="entry name" value="Potassium channel KAT2"/>
    <property type="match status" value="1"/>
</dbReference>
<dbReference type="FunFam" id="1.10.287.70:FF:000139">
    <property type="entry name" value="Potassium channel SKOR"/>
    <property type="match status" value="1"/>
</dbReference>
<dbReference type="Gene3D" id="1.10.287.70">
    <property type="match status" value="1"/>
</dbReference>
<dbReference type="Gene3D" id="1.25.40.20">
    <property type="entry name" value="Ankyrin repeat-containing domain"/>
    <property type="match status" value="2"/>
</dbReference>
<dbReference type="Gene3D" id="1.10.287.630">
    <property type="entry name" value="Helix hairpin bin"/>
    <property type="match status" value="1"/>
</dbReference>
<dbReference type="Gene3D" id="2.60.120.10">
    <property type="entry name" value="Jelly Rolls"/>
    <property type="match status" value="1"/>
</dbReference>
<dbReference type="InterPro" id="IPR002110">
    <property type="entry name" value="Ankyrin_rpt"/>
</dbReference>
<dbReference type="InterPro" id="IPR036770">
    <property type="entry name" value="Ankyrin_rpt-contain_sf"/>
</dbReference>
<dbReference type="InterPro" id="IPR000595">
    <property type="entry name" value="cNMP-bd_dom"/>
</dbReference>
<dbReference type="InterPro" id="IPR018490">
    <property type="entry name" value="cNMP-bd_dom_sf"/>
</dbReference>
<dbReference type="InterPro" id="IPR005821">
    <property type="entry name" value="Ion_trans_dom"/>
</dbReference>
<dbReference type="InterPro" id="IPR003938">
    <property type="entry name" value="K_chnl_volt-dep_EAG/ELK/ERG"/>
</dbReference>
<dbReference type="InterPro" id="IPR045319">
    <property type="entry name" value="KAT/AKT"/>
</dbReference>
<dbReference type="InterPro" id="IPR021789">
    <property type="entry name" value="KHA_dom"/>
</dbReference>
<dbReference type="InterPro" id="IPR014710">
    <property type="entry name" value="RmlC-like_jellyroll"/>
</dbReference>
<dbReference type="PANTHER" id="PTHR45743">
    <property type="entry name" value="POTASSIUM CHANNEL AKT1"/>
    <property type="match status" value="1"/>
</dbReference>
<dbReference type="PANTHER" id="PTHR45743:SF15">
    <property type="entry name" value="POTASSIUM CHANNEL GORK"/>
    <property type="match status" value="1"/>
</dbReference>
<dbReference type="Pfam" id="PF12796">
    <property type="entry name" value="Ank_2"/>
    <property type="match status" value="2"/>
</dbReference>
<dbReference type="Pfam" id="PF00027">
    <property type="entry name" value="cNMP_binding"/>
    <property type="match status" value="1"/>
</dbReference>
<dbReference type="Pfam" id="PF00520">
    <property type="entry name" value="Ion_trans"/>
    <property type="match status" value="1"/>
</dbReference>
<dbReference type="Pfam" id="PF11834">
    <property type="entry name" value="KHA"/>
    <property type="match status" value="1"/>
</dbReference>
<dbReference type="PRINTS" id="PR01463">
    <property type="entry name" value="EAGCHANLFMLY"/>
</dbReference>
<dbReference type="SMART" id="SM00248">
    <property type="entry name" value="ANK"/>
    <property type="match status" value="5"/>
</dbReference>
<dbReference type="SMART" id="SM00100">
    <property type="entry name" value="cNMP"/>
    <property type="match status" value="1"/>
</dbReference>
<dbReference type="SUPFAM" id="SSF48403">
    <property type="entry name" value="Ankyrin repeat"/>
    <property type="match status" value="1"/>
</dbReference>
<dbReference type="SUPFAM" id="SSF51206">
    <property type="entry name" value="cAMP-binding domain-like"/>
    <property type="match status" value="1"/>
</dbReference>
<dbReference type="SUPFAM" id="SSF81324">
    <property type="entry name" value="Voltage-gated potassium channels"/>
    <property type="match status" value="1"/>
</dbReference>
<dbReference type="PROSITE" id="PS50297">
    <property type="entry name" value="ANK_REP_REGION"/>
    <property type="match status" value="1"/>
</dbReference>
<dbReference type="PROSITE" id="PS50088">
    <property type="entry name" value="ANK_REPEAT"/>
    <property type="match status" value="3"/>
</dbReference>
<dbReference type="PROSITE" id="PS50042">
    <property type="entry name" value="CNMP_BINDING_3"/>
    <property type="match status" value="1"/>
</dbReference>
<dbReference type="PROSITE" id="PS51490">
    <property type="entry name" value="KHA"/>
    <property type="match status" value="1"/>
</dbReference>
<evidence type="ECO:0000250" key="1"/>
<evidence type="ECO:0000255" key="2"/>
<evidence type="ECO:0000255" key="3">
    <source>
        <dbReference type="PROSITE-ProRule" id="PRU00823"/>
    </source>
</evidence>
<evidence type="ECO:0000269" key="4">
    <source>
    </source>
</evidence>
<evidence type="ECO:0000269" key="5">
    <source>
    </source>
</evidence>
<evidence type="ECO:0000269" key="6">
    <source>
    </source>
</evidence>
<evidence type="ECO:0000269" key="7">
    <source>
    </source>
</evidence>
<evidence type="ECO:0000305" key="8"/>
<comment type="function">
    <text evidence="6">Major selective outward-rectifying potassium channel of the guard cell membrane. Involved in regulation of stomatal movements according to the water status. Assuming opened or closed conformations in response to the voltage difference across the membrane, the channel is activated by depolarization. Conductance of the channel is modulated in a potassium-dependent fashion. May interact with the cytoskeleton or with regulatory proteins.</text>
</comment>
<comment type="subunit">
    <text evidence="1">The potassium channel is probably composed of a homo- or heterotetrameric complex of pore-forming subunits.</text>
</comment>
<comment type="subcellular location">
    <subcellularLocation>
        <location>Membrane</location>
        <topology>Multi-pass membrane protein</topology>
    </subcellularLocation>
</comment>
<comment type="tissue specificity">
    <text evidence="4 5">Expressed in guard cell-containing tissues, in root epidermal cells and in root hairs. Detected in vascular cells of the root and shoot.</text>
</comment>
<comment type="induction">
    <text evidence="7">Up-regulated under drought, salt stress and cold conditions. Induced by abscisic acid (ABA) treatment in roots and shoots but not in guard cells.</text>
</comment>
<comment type="domain">
    <text>The segment S4 is probably the voltage-sensor and is characterized by a series of positively charged amino acids. The pore-forming region H5 is enclosed by the transmembrane segments S5 and S6 in the Shaker-type (1P/6TM) and contains the GYGD signature motif which seems to be involved in potassium selectivity.</text>
</comment>
<comment type="domain">
    <text>The KHA domain (rich in hydrophobic and acidic residues) present in the C-terminal part is likely to be important for tetramerization.</text>
</comment>
<comment type="similarity">
    <text evidence="8">Belongs to the potassium channel family. Plant (TC 1.A.1.4) subfamily.</text>
</comment>
<comment type="sequence caution" evidence="8">
    <conflict type="erroneous initiation">
        <sequence resource="EMBL-CDS" id="AAK83636"/>
    </conflict>
</comment>
<name>GORK_ARATH</name>
<organism>
    <name type="scientific">Arabidopsis thaliana</name>
    <name type="common">Mouse-ear cress</name>
    <dbReference type="NCBI Taxonomy" id="3702"/>
    <lineage>
        <taxon>Eukaryota</taxon>
        <taxon>Viridiplantae</taxon>
        <taxon>Streptophyta</taxon>
        <taxon>Embryophyta</taxon>
        <taxon>Tracheophyta</taxon>
        <taxon>Spermatophyta</taxon>
        <taxon>Magnoliopsida</taxon>
        <taxon>eudicotyledons</taxon>
        <taxon>Gunneridae</taxon>
        <taxon>Pentapetalae</taxon>
        <taxon>rosids</taxon>
        <taxon>malvids</taxon>
        <taxon>Brassicales</taxon>
        <taxon>Brassicaceae</taxon>
        <taxon>Camelineae</taxon>
        <taxon>Arabidopsis</taxon>
    </lineage>
</organism>
<sequence length="820" mass="94461">MGRLRRRQEIIDHEEEESNDDVSSRRGKLSLAETFRWLDSSEHRRIETDGHNDYKYIIHPKNRWYKAWEMFILVWAIYSSLFTPMEFGFFRGLPERLFVLDIVGQIAFLVDIVLQFFVAYRDTQTYRTVYKPTRIAFRYLKSHFLMDFIGCFPWDLIYKASGKHELVRYLLWIRLFRVRKVVEFFQRLEKDTRINYLFTRILKLLFVEVYCTHTAACIFYYLATTLPPENEGYTWIGSLKLGDYSYENFREIDLWKRYTTALYFAIVTMATVGYGDIHAVNLREMIFVMIYVSFDMVLGAYLIGNITALIVKGSNTERFRDKMNDLISFMNRKKLGRDLRSQITGHVRLQYDSHYTDTVMLQDIPASIRAKIAQLLYLPYIKKVPLFKGCSTEFINQIVIRLHEEYFLPGEVITEQGNVVDHLYFVCEGLLEALVTKTDGSEESVTLLGPHTSFGDISIICNISQPFTVRVCELCHLLRLDKQSFSNILEIYFHDGRTILNNIMEEKESNDRIKKLESDIVIHIGKQEAELALKVNSAAFQGDFYQLKSLIRSGADPNKTDYDGRSPLHLAACRGYEDITLFLIQEGVDVNLKDKFGHTPLFEAVKAGQEGVIGLLVKEGASFNLEDSGNFLCTTVAKGDSDFLKRLLSSGMNPNSEDYDHRTPLHVAASEGLFLMAKMLVEAGASVISKDRWGNSPLDEARLCGNKKLIKLLEDVKNAQSSIYPSSLRELQEERIERRKCTVFPFHPQEAKEERSRKHGVVVWIPSNLEKLIVTAAKELGLSDGASFVLLSEDQGRITDIDMISDGHKLYMISDTTDQT</sequence>
<protein>
    <recommendedName>
        <fullName>Potassium channel GORK</fullName>
    </recommendedName>
    <alternativeName>
        <fullName>Guard cell outward rectifying K(+) channel</fullName>
        <shortName>AtGORK</shortName>
    </alternativeName>
</protein>
<keyword id="KW-0002">3D-structure</keyword>
<keyword id="KW-0040">ANK repeat</keyword>
<keyword id="KW-0407">Ion channel</keyword>
<keyword id="KW-0406">Ion transport</keyword>
<keyword id="KW-0472">Membrane</keyword>
<keyword id="KW-0630">Potassium</keyword>
<keyword id="KW-0631">Potassium channel</keyword>
<keyword id="KW-0633">Potassium transport</keyword>
<keyword id="KW-1185">Reference proteome</keyword>
<keyword id="KW-0677">Repeat</keyword>
<keyword id="KW-0812">Transmembrane</keyword>
<keyword id="KW-1133">Transmembrane helix</keyword>
<keyword id="KW-0813">Transport</keyword>
<keyword id="KW-0851">Voltage-gated channel</keyword>
<feature type="chain" id="PRO_0000054129" description="Potassium channel GORK">
    <location>
        <begin position="1"/>
        <end position="820"/>
    </location>
</feature>
<feature type="topological domain" description="Cytoplasmic" evidence="2">
    <location>
        <begin position="1"/>
        <end position="69"/>
    </location>
</feature>
<feature type="transmembrane region" description="Helical; Name=Segment S1" evidence="2">
    <location>
        <begin position="70"/>
        <end position="90"/>
    </location>
</feature>
<feature type="topological domain" description="Extracellular" evidence="2">
    <location>
        <begin position="91"/>
        <end position="97"/>
    </location>
</feature>
<feature type="transmembrane region" description="Helical; Name=Segment S2" evidence="2">
    <location>
        <begin position="98"/>
        <end position="118"/>
    </location>
</feature>
<feature type="topological domain" description="Cytoplasmic" evidence="2">
    <location>
        <begin position="119"/>
        <end position="141"/>
    </location>
</feature>
<feature type="transmembrane region" description="Helical; Name=Segment S3" evidence="2">
    <location>
        <begin position="142"/>
        <end position="162"/>
    </location>
</feature>
<feature type="topological domain" description="Extracellular" evidence="2">
    <location>
        <begin position="163"/>
        <end position="168"/>
    </location>
</feature>
<feature type="transmembrane region" description="Helical; Voltage-sensor; Name=Segment S4" evidence="2">
    <location>
        <begin position="169"/>
        <end position="189"/>
    </location>
</feature>
<feature type="topological domain" description="Cytoplasmic" evidence="2">
    <location>
        <begin position="190"/>
        <end position="203"/>
    </location>
</feature>
<feature type="transmembrane region" description="Helical; Name=Segment S5" evidence="2">
    <location>
        <begin position="204"/>
        <end position="224"/>
    </location>
</feature>
<feature type="topological domain" description="Extracellular" evidence="2">
    <location>
        <begin position="225"/>
        <end position="259"/>
    </location>
</feature>
<feature type="intramembrane region" description="Pore-forming; Name=Segment H5" evidence="2">
    <location>
        <begin position="260"/>
        <end position="279"/>
    </location>
</feature>
<feature type="topological domain" description="Extracellular" evidence="2">
    <location>
        <begin position="280"/>
        <end position="285"/>
    </location>
</feature>
<feature type="transmembrane region" description="Helical; Name=Segment S6" evidence="2">
    <location>
        <begin position="286"/>
        <end position="306"/>
    </location>
</feature>
<feature type="topological domain" description="Cytoplasmic" evidence="2">
    <location>
        <begin position="307"/>
        <end position="820"/>
    </location>
</feature>
<feature type="repeat" description="ANK 1">
    <location>
        <begin position="528"/>
        <end position="559"/>
    </location>
</feature>
<feature type="repeat" description="ANK 2">
    <location>
        <begin position="563"/>
        <end position="592"/>
    </location>
</feature>
<feature type="repeat" description="ANK 3">
    <location>
        <begin position="596"/>
        <end position="625"/>
    </location>
</feature>
<feature type="repeat" description="ANK 4">
    <location>
        <begin position="627"/>
        <end position="656"/>
    </location>
</feature>
<feature type="repeat" description="ANK 5">
    <location>
        <begin position="660"/>
        <end position="689"/>
    </location>
</feature>
<feature type="repeat" description="ANK 6">
    <location>
        <begin position="693"/>
        <end position="722"/>
    </location>
</feature>
<feature type="domain" description="KHA" evidence="3">
    <location>
        <begin position="740"/>
        <end position="820"/>
    </location>
</feature>
<feature type="binding site">
    <location>
        <begin position="386"/>
        <end position="508"/>
    </location>
    <ligand>
        <name>a nucleoside 3',5'-cyclic phosphate</name>
        <dbReference type="ChEBI" id="CHEBI:58464"/>
    </ligand>
</feature>
<feature type="sequence conflict" description="In Ref. 1; CAC17380." evidence="8" ref="1">
    <original>T</original>
    <variation>S</variation>
    <location>
        <position position="125"/>
    </location>
</feature>
<feature type="sequence conflict" description="In Ref. 1; CAC17380." evidence="8" ref="1">
    <original>N</original>
    <variation>Q</variation>
    <location>
        <position position="230"/>
    </location>
</feature>
<feature type="sequence conflict" description="In Ref. 1; CAC17380." evidence="8" ref="1">
    <original>I</original>
    <variation>V</variation>
    <location>
        <position position="306"/>
    </location>
</feature>
<feature type="sequence conflict" description="In Ref. 1; CAC17380." evidence="8" ref="1">
    <original>I</original>
    <variation>V</variation>
    <location>
        <position position="765"/>
    </location>
</feature>
<proteinExistence type="evidence at protein level"/>
<accession>Q94A76</accession>
<accession>Q9FNY5</accession>
<gene>
    <name type="primary">GORK</name>
    <name type="ordered locus">At5g37500</name>
    <name type="ORF">MPA22.4</name>
</gene>
<reference key="1">
    <citation type="journal article" date="2000" name="FEBS Lett.">
        <title>GORK, a delayed outward rectifier expressed in guard cells of Arabidopsis thaliana, is a K(+)-selective, K(+)-sensing ion channel.</title>
        <authorList>
            <person name="Ache P."/>
            <person name="Becker D."/>
            <person name="Ivashikina N."/>
            <person name="Dietrich P."/>
            <person name="Roelfsema M.R.G."/>
            <person name="Hedrich R."/>
        </authorList>
    </citation>
    <scope>NUCLEOTIDE SEQUENCE [MRNA]</scope>
    <scope>TISSUE SPECIFICITY</scope>
    <scope>CHARACTERIZATION</scope>
    <source>
        <strain>cv. Wassilewskija</strain>
    </source>
</reference>
<reference key="2">
    <citation type="submission" date="1999-04" db="EMBL/GenBank/DDBJ databases">
        <title>Structural analysis of Arabidopsis thaliana chromosome 5. XI.</title>
        <authorList>
            <person name="Kaneko T."/>
            <person name="Katoh T."/>
            <person name="Asamizu E."/>
            <person name="Sato S."/>
            <person name="Nakamura Y."/>
            <person name="Kotani H."/>
            <person name="Tabata S."/>
        </authorList>
    </citation>
    <scope>NUCLEOTIDE SEQUENCE [LARGE SCALE GENOMIC DNA]</scope>
    <source>
        <strain>cv. Columbia</strain>
    </source>
</reference>
<reference key="3">
    <citation type="journal article" date="2017" name="Plant J.">
        <title>Araport11: a complete reannotation of the Arabidopsis thaliana reference genome.</title>
        <authorList>
            <person name="Cheng C.Y."/>
            <person name="Krishnakumar V."/>
            <person name="Chan A.P."/>
            <person name="Thibaud-Nissen F."/>
            <person name="Schobel S."/>
            <person name="Town C.D."/>
        </authorList>
    </citation>
    <scope>GENOME REANNOTATION</scope>
    <source>
        <strain>cv. Columbia</strain>
    </source>
</reference>
<reference key="4">
    <citation type="journal article" date="2003" name="Science">
        <title>Empirical analysis of transcriptional activity in the Arabidopsis genome.</title>
        <authorList>
            <person name="Yamada K."/>
            <person name="Lim J."/>
            <person name="Dale J.M."/>
            <person name="Chen H."/>
            <person name="Shinn P."/>
            <person name="Palm C.J."/>
            <person name="Southwick A.M."/>
            <person name="Wu H.C."/>
            <person name="Kim C.J."/>
            <person name="Nguyen M."/>
            <person name="Pham P.K."/>
            <person name="Cheuk R.F."/>
            <person name="Karlin-Newmann G."/>
            <person name="Liu S.X."/>
            <person name="Lam B."/>
            <person name="Sakano H."/>
            <person name="Wu T."/>
            <person name="Yu G."/>
            <person name="Miranda M."/>
            <person name="Quach H.L."/>
            <person name="Tripp M."/>
            <person name="Chang C.H."/>
            <person name="Lee J.M."/>
            <person name="Toriumi M.J."/>
            <person name="Chan M.M."/>
            <person name="Tang C.C."/>
            <person name="Onodera C.S."/>
            <person name="Deng J.M."/>
            <person name="Akiyama K."/>
            <person name="Ansari Y."/>
            <person name="Arakawa T."/>
            <person name="Banh J."/>
            <person name="Banno F."/>
            <person name="Bowser L."/>
            <person name="Brooks S.Y."/>
            <person name="Carninci P."/>
            <person name="Chao Q."/>
            <person name="Choy N."/>
            <person name="Enju A."/>
            <person name="Goldsmith A.D."/>
            <person name="Gurjal M."/>
            <person name="Hansen N.F."/>
            <person name="Hayashizaki Y."/>
            <person name="Johnson-Hopson C."/>
            <person name="Hsuan V.W."/>
            <person name="Iida K."/>
            <person name="Karnes M."/>
            <person name="Khan S."/>
            <person name="Koesema E."/>
            <person name="Ishida J."/>
            <person name="Jiang P.X."/>
            <person name="Jones T."/>
            <person name="Kawai J."/>
            <person name="Kamiya A."/>
            <person name="Meyers C."/>
            <person name="Nakajima M."/>
            <person name="Narusaka M."/>
            <person name="Seki M."/>
            <person name="Sakurai T."/>
            <person name="Satou M."/>
            <person name="Tamse R."/>
            <person name="Vaysberg M."/>
            <person name="Wallender E.K."/>
            <person name="Wong C."/>
            <person name="Yamamura Y."/>
            <person name="Yuan S."/>
            <person name="Shinozaki K."/>
            <person name="Davis R.W."/>
            <person name="Theologis A."/>
            <person name="Ecker J.R."/>
        </authorList>
    </citation>
    <scope>NUCLEOTIDE SEQUENCE [LARGE SCALE MRNA] OF 489-820</scope>
    <source>
        <strain>cv. Columbia</strain>
    </source>
</reference>
<reference key="5">
    <citation type="journal article" date="2001" name="FEBS Lett.">
        <title>K(+) channel profile and electrical properties of Arabidopsis root hairs.</title>
        <authorList>
            <person name="Ivashikina N."/>
            <person name="Becker D."/>
            <person name="Ache P."/>
            <person name="Meyerhoff O."/>
            <person name="Felle H.H."/>
            <person name="Hedrich R."/>
        </authorList>
    </citation>
    <scope>TISSUE SPECIFICITY</scope>
</reference>
<reference key="6">
    <citation type="journal article" date="2001" name="Plant Physiol.">
        <title>Phylogenetic relationships within cation transporter families of Arabidopsis.</title>
        <authorList>
            <person name="Maeser P."/>
            <person name="Thomine S."/>
            <person name="Schroeder J.I."/>
            <person name="Ward J.M."/>
            <person name="Hirschi K."/>
            <person name="Sze H."/>
            <person name="Talke I.N."/>
            <person name="Amtmann A."/>
            <person name="Maathuis F.J.M."/>
            <person name="Sanders D."/>
            <person name="Harper J.F."/>
            <person name="Tchieu J."/>
            <person name="Gribskov M."/>
            <person name="Persans M.W."/>
            <person name="Salt D.E."/>
            <person name="Kim S.A."/>
            <person name="Guerinot M.L."/>
        </authorList>
    </citation>
    <scope>GENE FAMILY</scope>
    <scope>NOMENCLATURE</scope>
</reference>
<reference key="7">
    <citation type="journal article" date="2003" name="Proc. Natl. Acad. Sci. U.S.A.">
        <title>The Arabidopsis outward K(+) channel GORK is involved in regulation of stomatal movements and plant transpiration.</title>
        <authorList>
            <person name="Hosy E."/>
            <person name="Vavasseur A."/>
            <person name="Mouline K."/>
            <person name="Dreyer I."/>
            <person name="Gaymard F."/>
            <person name="Poree F."/>
            <person name="Boucherez J."/>
            <person name="Lebaudy A."/>
            <person name="Bouchez D."/>
            <person name="Very A.-A."/>
            <person name="Simonneau T."/>
            <person name="Thibaud J.-B."/>
            <person name="Sentenac H."/>
        </authorList>
    </citation>
    <scope>CHARACTERIZATION</scope>
    <scope>FUNCTION</scope>
</reference>
<reference key="8">
    <citation type="journal article" date="2003" name="FEBS Lett.">
        <title>Regulation of the ABA-sensitive Arabidopsis potassium channel gene GORK in response to water stress.</title>
        <authorList>
            <person name="Becker D."/>
            <person name="Hoth S."/>
            <person name="Ache P."/>
            <person name="Wenkel S."/>
            <person name="Roelfsema M.R.G."/>
            <person name="Meyerhoff O."/>
            <person name="Hartung W."/>
            <person name="Hedrich R."/>
        </authorList>
    </citation>
    <scope>INDUCTION</scope>
</reference>